<reference key="1">
    <citation type="journal article" date="2000" name="Biochemistry">
        <title>Structure of a murine cytoplasmic serine hydroxymethyltransferase quinonoid ternary complex: evidence for asymmetric obligate dimers.</title>
        <authorList>
            <person name="Szebenyi D.M.E."/>
            <person name="Liu X."/>
            <person name="Kriksunov I.A."/>
            <person name="Stover P.J."/>
            <person name="Thiel D.J."/>
        </authorList>
    </citation>
    <scope>NUCLEOTIDE SEQUENCE [MRNA]</scope>
    <scope>X-RAY CRYSTALLOGRAPHY (2.9 ANGSTROMS) IN COMPLEX WITH PYRIDOXAL PHOSPHATE AND SUBSTRATES</scope>
    <scope>COFACTOR</scope>
    <scope>SUBUNIT</scope>
    <source>
        <strain>129/Sv</strain>
        <tissue>Liver</tissue>
    </source>
</reference>
<reference key="2">
    <citation type="journal article" date="2009" name="PLoS Biol.">
        <title>Lineage-specific biology revealed by a finished genome assembly of the mouse.</title>
        <authorList>
            <person name="Church D.M."/>
            <person name="Goodstadt L."/>
            <person name="Hillier L.W."/>
            <person name="Zody M.C."/>
            <person name="Goldstein S."/>
            <person name="She X."/>
            <person name="Bult C.J."/>
            <person name="Agarwala R."/>
            <person name="Cherry J.L."/>
            <person name="DiCuccio M."/>
            <person name="Hlavina W."/>
            <person name="Kapustin Y."/>
            <person name="Meric P."/>
            <person name="Maglott D."/>
            <person name="Birtle Z."/>
            <person name="Marques A.C."/>
            <person name="Graves T."/>
            <person name="Zhou S."/>
            <person name="Teague B."/>
            <person name="Potamousis K."/>
            <person name="Churas C."/>
            <person name="Place M."/>
            <person name="Herschleb J."/>
            <person name="Runnheim R."/>
            <person name="Forrest D."/>
            <person name="Amos-Landgraf J."/>
            <person name="Schwartz D.C."/>
            <person name="Cheng Z."/>
            <person name="Lindblad-Toh K."/>
            <person name="Eichler E.E."/>
            <person name="Ponting C.P."/>
        </authorList>
    </citation>
    <scope>NUCLEOTIDE SEQUENCE [LARGE SCALE GENOMIC DNA]</scope>
    <source>
        <strain>C57BL/6J</strain>
    </source>
</reference>
<reference key="3">
    <citation type="journal article" date="2004" name="Genome Res.">
        <title>The status, quality, and expansion of the NIH full-length cDNA project: the Mammalian Gene Collection (MGC).</title>
        <authorList>
            <consortium name="The MGC Project Team"/>
        </authorList>
    </citation>
    <scope>NUCLEOTIDE SEQUENCE [LARGE SCALE MRNA]</scope>
    <source>
        <strain>FVB/N</strain>
        <tissue>Liver</tissue>
    </source>
</reference>
<reference key="4">
    <citation type="journal article" date="1996" name="Gene">
        <title>Isolation of retinoic acid-repressed genes from P19 embryonal carcinoma cells.</title>
        <authorList>
            <person name="Nakshatri H."/>
            <person name="Bouillet P."/>
            <person name="Bhat-Nakshatri P."/>
            <person name="Chambon P."/>
        </authorList>
    </citation>
    <scope>NUCLEOTIDE SEQUENCE [MRNA] OF 1-316</scope>
</reference>
<reference key="5">
    <citation type="submission" date="2009-01" db="UniProtKB">
        <authorList>
            <person name="Lubec G."/>
            <person name="Sunyer B."/>
            <person name="Chen W.-Q."/>
        </authorList>
    </citation>
    <scope>PROTEIN SEQUENCE OF 22-32; 40-53; 331-342 AND 452-460</scope>
    <scope>IDENTIFICATION BY MASS SPECTROMETRY</scope>
    <source>
        <strain>OF1</strain>
        <tissue>Hippocampus</tissue>
    </source>
</reference>
<reference key="6">
    <citation type="journal article" date="2010" name="Cell">
        <title>A tissue-specific atlas of mouse protein phosphorylation and expression.</title>
        <authorList>
            <person name="Huttlin E.L."/>
            <person name="Jedrychowski M.P."/>
            <person name="Elias J.E."/>
            <person name="Goswami T."/>
            <person name="Rad R."/>
            <person name="Beausoleil S.A."/>
            <person name="Villen J."/>
            <person name="Haas W."/>
            <person name="Sowa M.E."/>
            <person name="Gygi S.P."/>
        </authorList>
    </citation>
    <scope>IDENTIFICATION BY MASS SPECTROMETRY [LARGE SCALE ANALYSIS]</scope>
    <source>
        <tissue>Brown adipose tissue</tissue>
        <tissue>Kidney</tissue>
        <tissue>Liver</tissue>
        <tissue>Pancreas</tissue>
        <tissue>Spleen</tissue>
        <tissue>Testis</tissue>
    </source>
</reference>
<proteinExistence type="evidence at protein level"/>
<dbReference type="EC" id="2.1.2.1" evidence="1"/>
<dbReference type="EMBL" id="AF237702">
    <property type="protein sequence ID" value="AAK15040.1"/>
    <property type="molecule type" value="mRNA"/>
</dbReference>
<dbReference type="EMBL" id="AL596215">
    <property type="status" value="NOT_ANNOTATED_CDS"/>
    <property type="molecule type" value="Genomic_DNA"/>
</dbReference>
<dbReference type="EMBL" id="BC026055">
    <property type="protein sequence ID" value="AAH26055.1"/>
    <property type="molecule type" value="mRNA"/>
</dbReference>
<dbReference type="EMBL" id="X94478">
    <property type="protein sequence ID" value="CAA64225.1"/>
    <property type="molecule type" value="mRNA"/>
</dbReference>
<dbReference type="EMBL" id="X94479">
    <property type="protein sequence ID" value="CAA64226.1"/>
    <property type="molecule type" value="mRNA"/>
</dbReference>
<dbReference type="CCDS" id="CCDS24799.1"/>
<dbReference type="PIR" id="JC4959">
    <property type="entry name" value="JC4959"/>
</dbReference>
<dbReference type="RefSeq" id="NP_001412339.1">
    <property type="nucleotide sequence ID" value="NM_001425410.1"/>
</dbReference>
<dbReference type="RefSeq" id="NP_033197.2">
    <property type="nucleotide sequence ID" value="NM_009171.3"/>
</dbReference>
<dbReference type="RefSeq" id="XP_006532707.1">
    <property type="nucleotide sequence ID" value="XM_006532644.3"/>
</dbReference>
<dbReference type="PDB" id="1EJI">
    <property type="method" value="X-ray"/>
    <property type="resolution" value="2.90 A"/>
    <property type="chains" value="A/B/C/D=1-478"/>
</dbReference>
<dbReference type="PDBsum" id="1EJI"/>
<dbReference type="SMR" id="P50431"/>
<dbReference type="BioGRID" id="203222">
    <property type="interactions" value="12"/>
</dbReference>
<dbReference type="FunCoup" id="P50431">
    <property type="interactions" value="2624"/>
</dbReference>
<dbReference type="STRING" id="10090.ENSMUSP00000018744"/>
<dbReference type="ChEMBL" id="CHEMBL4396"/>
<dbReference type="GlyGen" id="P50431">
    <property type="glycosylation" value="3 sites, 1 O-linked glycan (3 sites)"/>
</dbReference>
<dbReference type="iPTMnet" id="P50431"/>
<dbReference type="PhosphoSitePlus" id="P50431"/>
<dbReference type="SwissPalm" id="P50431"/>
<dbReference type="REPRODUCTION-2DPAGE" id="P50431"/>
<dbReference type="jPOST" id="P50431"/>
<dbReference type="PaxDb" id="10090-ENSMUSP00000018744"/>
<dbReference type="PeptideAtlas" id="P50431"/>
<dbReference type="ProteomicsDB" id="263377"/>
<dbReference type="Pumba" id="P50431"/>
<dbReference type="Antibodypedia" id="13529">
    <property type="antibodies" value="282 antibodies from 34 providers"/>
</dbReference>
<dbReference type="DNASU" id="20425"/>
<dbReference type="Ensembl" id="ENSMUST00000018744.15">
    <property type="protein sequence ID" value="ENSMUSP00000018744.9"/>
    <property type="gene ID" value="ENSMUSG00000020534.15"/>
</dbReference>
<dbReference type="GeneID" id="20425"/>
<dbReference type="KEGG" id="mmu:20425"/>
<dbReference type="UCSC" id="uc007jgo.1">
    <property type="organism name" value="mouse"/>
</dbReference>
<dbReference type="AGR" id="MGI:98299"/>
<dbReference type="CTD" id="6470"/>
<dbReference type="MGI" id="MGI:98299">
    <property type="gene designation" value="Shmt1"/>
</dbReference>
<dbReference type="VEuPathDB" id="HostDB:ENSMUSG00000020534"/>
<dbReference type="eggNOG" id="KOG2467">
    <property type="taxonomic scope" value="Eukaryota"/>
</dbReference>
<dbReference type="GeneTree" id="ENSGT00390000002762"/>
<dbReference type="HOGENOM" id="CLU_022477_0_0_1"/>
<dbReference type="InParanoid" id="P50431"/>
<dbReference type="OMA" id="CQFANVQ"/>
<dbReference type="OrthoDB" id="10265628at2759"/>
<dbReference type="PhylomeDB" id="P50431"/>
<dbReference type="TreeFam" id="TF314667"/>
<dbReference type="Reactome" id="R-MMU-196757">
    <property type="pathway name" value="Metabolism of folate and pterines"/>
</dbReference>
<dbReference type="Reactome" id="R-MMU-71262">
    <property type="pathway name" value="Carnitine synthesis"/>
</dbReference>
<dbReference type="UniPathway" id="UPA00193"/>
<dbReference type="BioGRID-ORCS" id="20425">
    <property type="hits" value="4 hits in 80 CRISPR screens"/>
</dbReference>
<dbReference type="ChiTaRS" id="Shmt1">
    <property type="organism name" value="mouse"/>
</dbReference>
<dbReference type="EvolutionaryTrace" id="P50431"/>
<dbReference type="PRO" id="PR:P50431"/>
<dbReference type="Proteomes" id="UP000000589">
    <property type="component" value="Chromosome 11"/>
</dbReference>
<dbReference type="RNAct" id="P50431">
    <property type="molecule type" value="protein"/>
</dbReference>
<dbReference type="Bgee" id="ENSMUSG00000020534">
    <property type="expression patterns" value="Expressed in yolk sac and 266 other cell types or tissues"/>
</dbReference>
<dbReference type="ExpressionAtlas" id="P50431">
    <property type="expression patterns" value="baseline and differential"/>
</dbReference>
<dbReference type="GO" id="GO:0005829">
    <property type="term" value="C:cytosol"/>
    <property type="evidence" value="ECO:0000250"/>
    <property type="project" value="UniProtKB"/>
</dbReference>
<dbReference type="GO" id="GO:0005739">
    <property type="term" value="C:mitochondrion"/>
    <property type="evidence" value="ECO:0007005"/>
    <property type="project" value="MGI"/>
</dbReference>
<dbReference type="GO" id="GO:0005654">
    <property type="term" value="C:nucleoplasm"/>
    <property type="evidence" value="ECO:0007669"/>
    <property type="project" value="Ensembl"/>
</dbReference>
<dbReference type="GO" id="GO:0005634">
    <property type="term" value="C:nucleus"/>
    <property type="evidence" value="ECO:0000314"/>
    <property type="project" value="MGI"/>
</dbReference>
<dbReference type="GO" id="GO:0004372">
    <property type="term" value="F:glycine hydroxymethyltransferase activity"/>
    <property type="evidence" value="ECO:0000315"/>
    <property type="project" value="MGI"/>
</dbReference>
<dbReference type="GO" id="GO:0048027">
    <property type="term" value="F:mRNA 5'-UTR binding"/>
    <property type="evidence" value="ECO:0007669"/>
    <property type="project" value="Ensembl"/>
</dbReference>
<dbReference type="GO" id="GO:0000900">
    <property type="term" value="F:mRNA regulatory element binding translation repressor activity"/>
    <property type="evidence" value="ECO:0007669"/>
    <property type="project" value="Ensembl"/>
</dbReference>
<dbReference type="GO" id="GO:0042803">
    <property type="term" value="F:protein homodimerization activity"/>
    <property type="evidence" value="ECO:0007669"/>
    <property type="project" value="Ensembl"/>
</dbReference>
<dbReference type="GO" id="GO:0030170">
    <property type="term" value="F:pyridoxal phosphate binding"/>
    <property type="evidence" value="ECO:0000250"/>
    <property type="project" value="UniProtKB"/>
</dbReference>
<dbReference type="GO" id="GO:0070905">
    <property type="term" value="F:serine binding"/>
    <property type="evidence" value="ECO:0007669"/>
    <property type="project" value="Ensembl"/>
</dbReference>
<dbReference type="GO" id="GO:1990830">
    <property type="term" value="P:cellular response to leukemia inhibitory factor"/>
    <property type="evidence" value="ECO:0000270"/>
    <property type="project" value="MGI"/>
</dbReference>
<dbReference type="GO" id="GO:1904482">
    <property type="term" value="P:cellular response to tetrahydrofolate"/>
    <property type="evidence" value="ECO:0007669"/>
    <property type="project" value="Ensembl"/>
</dbReference>
<dbReference type="GO" id="GO:0006231">
    <property type="term" value="P:dTMP biosynthetic process"/>
    <property type="evidence" value="ECO:0000315"/>
    <property type="project" value="BHF-UCL"/>
</dbReference>
<dbReference type="GO" id="GO:0046655">
    <property type="term" value="P:folic acid metabolic process"/>
    <property type="evidence" value="ECO:0007669"/>
    <property type="project" value="Ensembl"/>
</dbReference>
<dbReference type="GO" id="GO:0019264">
    <property type="term" value="P:glycine biosynthetic process from serine"/>
    <property type="evidence" value="ECO:0007669"/>
    <property type="project" value="InterPro"/>
</dbReference>
<dbReference type="GO" id="GO:0006544">
    <property type="term" value="P:glycine metabolic process"/>
    <property type="evidence" value="ECO:0000250"/>
    <property type="project" value="UniProtKB"/>
</dbReference>
<dbReference type="GO" id="GO:0006565">
    <property type="term" value="P:L-serine catabolic process"/>
    <property type="evidence" value="ECO:0007669"/>
    <property type="project" value="Ensembl"/>
</dbReference>
<dbReference type="GO" id="GO:0006563">
    <property type="term" value="P:L-serine metabolic process"/>
    <property type="evidence" value="ECO:0000250"/>
    <property type="project" value="UniProtKB"/>
</dbReference>
<dbReference type="GO" id="GO:0006730">
    <property type="term" value="P:one-carbon metabolic process"/>
    <property type="evidence" value="ECO:0000305"/>
    <property type="project" value="BHF-UCL"/>
</dbReference>
<dbReference type="GO" id="GO:0051289">
    <property type="term" value="P:protein homotetramerization"/>
    <property type="evidence" value="ECO:0000250"/>
    <property type="project" value="UniProtKB"/>
</dbReference>
<dbReference type="GO" id="GO:0009113">
    <property type="term" value="P:purine nucleobase biosynthetic process"/>
    <property type="evidence" value="ECO:0007669"/>
    <property type="project" value="Ensembl"/>
</dbReference>
<dbReference type="GO" id="GO:0035999">
    <property type="term" value="P:tetrahydrofolate interconversion"/>
    <property type="evidence" value="ECO:0000315"/>
    <property type="project" value="MGI"/>
</dbReference>
<dbReference type="GO" id="GO:0046653">
    <property type="term" value="P:tetrahydrofolate metabolic process"/>
    <property type="evidence" value="ECO:0000250"/>
    <property type="project" value="UniProtKB"/>
</dbReference>
<dbReference type="CDD" id="cd00378">
    <property type="entry name" value="SHMT"/>
    <property type="match status" value="1"/>
</dbReference>
<dbReference type="FunFam" id="3.40.640.10:FF:000097">
    <property type="entry name" value="Serine hydroxymethyltransferase"/>
    <property type="match status" value="1"/>
</dbReference>
<dbReference type="FunFam" id="3.90.1150.10:FF:000005">
    <property type="entry name" value="Serine hydroxymethyltransferase"/>
    <property type="match status" value="1"/>
</dbReference>
<dbReference type="Gene3D" id="3.90.1150.10">
    <property type="entry name" value="Aspartate Aminotransferase, domain 1"/>
    <property type="match status" value="1"/>
</dbReference>
<dbReference type="Gene3D" id="3.40.640.10">
    <property type="entry name" value="Type I PLP-dependent aspartate aminotransferase-like (Major domain)"/>
    <property type="match status" value="1"/>
</dbReference>
<dbReference type="HAMAP" id="MF_00051">
    <property type="entry name" value="SHMT"/>
    <property type="match status" value="1"/>
</dbReference>
<dbReference type="InterPro" id="IPR015424">
    <property type="entry name" value="PyrdxlP-dep_Trfase"/>
</dbReference>
<dbReference type="InterPro" id="IPR015421">
    <property type="entry name" value="PyrdxlP-dep_Trfase_major"/>
</dbReference>
<dbReference type="InterPro" id="IPR015422">
    <property type="entry name" value="PyrdxlP-dep_Trfase_small"/>
</dbReference>
<dbReference type="InterPro" id="IPR001085">
    <property type="entry name" value="Ser_HO-MeTrfase"/>
</dbReference>
<dbReference type="InterPro" id="IPR049943">
    <property type="entry name" value="Ser_HO-MeTrfase-like"/>
</dbReference>
<dbReference type="InterPro" id="IPR019798">
    <property type="entry name" value="Ser_HO-MeTrfase_PLP_BS"/>
</dbReference>
<dbReference type="InterPro" id="IPR039429">
    <property type="entry name" value="SHMT-like_dom"/>
</dbReference>
<dbReference type="NCBIfam" id="NF000586">
    <property type="entry name" value="PRK00011.1"/>
    <property type="match status" value="1"/>
</dbReference>
<dbReference type="PANTHER" id="PTHR11680">
    <property type="entry name" value="SERINE HYDROXYMETHYLTRANSFERASE"/>
    <property type="match status" value="1"/>
</dbReference>
<dbReference type="PANTHER" id="PTHR11680:SF59">
    <property type="entry name" value="SERINE HYDROXYMETHYLTRANSFERASE, CYTOSOLIC"/>
    <property type="match status" value="1"/>
</dbReference>
<dbReference type="Pfam" id="PF00464">
    <property type="entry name" value="SHMT"/>
    <property type="match status" value="1"/>
</dbReference>
<dbReference type="PIRSF" id="PIRSF000412">
    <property type="entry name" value="SHMT"/>
    <property type="match status" value="1"/>
</dbReference>
<dbReference type="SUPFAM" id="SSF53383">
    <property type="entry name" value="PLP-dependent transferases"/>
    <property type="match status" value="1"/>
</dbReference>
<dbReference type="PROSITE" id="PS00096">
    <property type="entry name" value="SHMT"/>
    <property type="match status" value="1"/>
</dbReference>
<sequence>MADRDATLWASHEKMLSQPLKDSDAEVYSIIKKESNRQRVGLELIASENFASRAVLEALGSCLNNKYSEGYPGQRYYGGTEFIDELEMLCQKRALQAYHLDPQCWGVNVQPYSGSPANFAVYTALVEPHGRIMGLDLPDGGHLTHGFMTDKKKISATSIFFESMPYKVYPETGYINYDQLEENASLFHPKLIIAGTSCYSRNLDYARLRKIADDNGAYLMADMAHISGLVAAGVVPSPFEHCHVVTTTTHKTLRGCRAGMIFYRKGVRSVDPKTGKETYYELESLINSAVFPGLQGGPHNHAIAGVAVALKQAMTTEFKIYQLQVLANCRALSDALTELGYKIVTGGSDNHLILMDLRSKGTDGGRAEKVLEACSIACNKNTCPGDKSALRPSGLRLGTPALTSRGLLEEDFQKVAHFIHRGIELTLQIQSHMATKATLKEFKEKLAGDEKIQSAVATLREEVENFASNFSLPGLPDF</sequence>
<feature type="chain" id="PRO_0000113505" description="Serine hydroxymethyltransferase, cytosolic">
    <location>
        <begin position="1"/>
        <end position="478"/>
    </location>
</feature>
<feature type="modified residue" description="N6-(pyridoxal phosphate)lysine" evidence="2">
    <location>
        <position position="251"/>
    </location>
</feature>
<feature type="sequence conflict" description="In Ref. 1; AAK15040 and 4; CAA64225/CAA64226." evidence="3" ref="1 4">
    <original>C</original>
    <variation>S</variation>
    <location>
        <position position="62"/>
    </location>
</feature>
<feature type="sequence conflict" description="In Ref. 4; CAA64225." evidence="3" ref="4">
    <original>VRSVDPKTGKETYYELESLINSAVFPGLQGGPHNHAIAGVAVA</original>
    <variation>KFPYAGTDSVGSHFLCGRDWENSGLSLLGKIGALALEELLRKK</variation>
    <location>
        <begin position="267"/>
        <end position="309"/>
    </location>
</feature>
<feature type="sequence conflict" description="In Ref. 4; CAA64226." evidence="3" ref="4">
    <original>A</original>
    <variation>R</variation>
    <location>
        <position position="304"/>
    </location>
</feature>
<feature type="strand" evidence="4">
    <location>
        <begin position="3"/>
        <end position="5"/>
    </location>
</feature>
<feature type="helix" evidence="4">
    <location>
        <begin position="6"/>
        <end position="15"/>
    </location>
</feature>
<feature type="helix" evidence="4">
    <location>
        <begin position="20"/>
        <end position="23"/>
    </location>
</feature>
<feature type="helix" evidence="4">
    <location>
        <begin position="25"/>
        <end position="39"/>
    </location>
</feature>
<feature type="strand" evidence="4">
    <location>
        <begin position="40"/>
        <end position="43"/>
    </location>
</feature>
<feature type="helix" evidence="4">
    <location>
        <begin position="53"/>
        <end position="59"/>
    </location>
</feature>
<feature type="helix" evidence="4">
    <location>
        <begin position="62"/>
        <end position="65"/>
    </location>
</feature>
<feature type="strand" evidence="4">
    <location>
        <begin position="72"/>
        <end position="74"/>
    </location>
</feature>
<feature type="strand" evidence="4">
    <location>
        <begin position="76"/>
        <end position="78"/>
    </location>
</feature>
<feature type="helix" evidence="4">
    <location>
        <begin position="81"/>
        <end position="97"/>
    </location>
</feature>
<feature type="turn" evidence="4">
    <location>
        <begin position="102"/>
        <end position="104"/>
    </location>
</feature>
<feature type="strand" evidence="4">
    <location>
        <begin position="105"/>
        <end position="108"/>
    </location>
</feature>
<feature type="helix" evidence="4">
    <location>
        <begin position="114"/>
        <end position="125"/>
    </location>
</feature>
<feature type="strand" evidence="4">
    <location>
        <begin position="131"/>
        <end position="135"/>
    </location>
</feature>
<feature type="helix" evidence="4">
    <location>
        <begin position="137"/>
        <end position="139"/>
    </location>
</feature>
<feature type="helix" evidence="4">
    <location>
        <begin position="143"/>
        <end position="145"/>
    </location>
</feature>
<feature type="helix" evidence="4">
    <location>
        <begin position="156"/>
        <end position="160"/>
    </location>
</feature>
<feature type="strand" evidence="4">
    <location>
        <begin position="161"/>
        <end position="166"/>
    </location>
</feature>
<feature type="turn" evidence="4">
    <location>
        <begin position="170"/>
        <end position="172"/>
    </location>
</feature>
<feature type="helix" evidence="4">
    <location>
        <begin position="177"/>
        <end position="187"/>
    </location>
</feature>
<feature type="strand" evidence="4">
    <location>
        <begin position="190"/>
        <end position="194"/>
    </location>
</feature>
<feature type="helix" evidence="4">
    <location>
        <begin position="205"/>
        <end position="214"/>
    </location>
</feature>
<feature type="strand" evidence="4">
    <location>
        <begin position="218"/>
        <end position="222"/>
    </location>
</feature>
<feature type="helix" evidence="4">
    <location>
        <begin position="224"/>
        <end position="226"/>
    </location>
</feature>
<feature type="helix" evidence="4">
    <location>
        <begin position="227"/>
        <end position="231"/>
    </location>
</feature>
<feature type="helix" evidence="4">
    <location>
        <begin position="238"/>
        <end position="240"/>
    </location>
</feature>
<feature type="strand" evidence="4">
    <location>
        <begin position="243"/>
        <end position="250"/>
    </location>
</feature>
<feature type="helix" evidence="4">
    <location>
        <begin position="251"/>
        <end position="253"/>
    </location>
</feature>
<feature type="strand" evidence="4">
    <location>
        <begin position="259"/>
        <end position="264"/>
    </location>
</feature>
<feature type="strand" evidence="4">
    <location>
        <begin position="266"/>
        <end position="270"/>
    </location>
</feature>
<feature type="strand" evidence="4">
    <location>
        <begin position="277"/>
        <end position="280"/>
    </location>
</feature>
<feature type="helix" evidence="4">
    <location>
        <begin position="282"/>
        <end position="290"/>
    </location>
</feature>
<feature type="turn" evidence="4">
    <location>
        <begin position="291"/>
        <end position="294"/>
    </location>
</feature>
<feature type="helix" evidence="4">
    <location>
        <begin position="300"/>
        <end position="313"/>
    </location>
</feature>
<feature type="helix" evidence="4">
    <location>
        <begin position="316"/>
        <end position="338"/>
    </location>
</feature>
<feature type="strand" evidence="4">
    <location>
        <begin position="349"/>
        <end position="356"/>
    </location>
</feature>
<feature type="helix" evidence="4">
    <location>
        <begin position="357"/>
        <end position="360"/>
    </location>
</feature>
<feature type="helix" evidence="4">
    <location>
        <begin position="364"/>
        <end position="373"/>
    </location>
</feature>
<feature type="strand" evidence="4">
    <location>
        <begin position="384"/>
        <end position="387"/>
    </location>
</feature>
<feature type="strand" evidence="4">
    <location>
        <begin position="393"/>
        <end position="398"/>
    </location>
</feature>
<feature type="helix" evidence="4">
    <location>
        <begin position="400"/>
        <end position="403"/>
    </location>
</feature>
<feature type="turn" evidence="4">
    <location>
        <begin position="404"/>
        <end position="406"/>
    </location>
</feature>
<feature type="helix" evidence="4">
    <location>
        <begin position="409"/>
        <end position="431"/>
    </location>
</feature>
<feature type="helix" evidence="4">
    <location>
        <begin position="439"/>
        <end position="447"/>
    </location>
</feature>
<feature type="helix" evidence="4">
    <location>
        <begin position="453"/>
        <end position="467"/>
    </location>
</feature>
<feature type="strand" evidence="4">
    <location>
        <begin position="474"/>
        <end position="476"/>
    </location>
</feature>
<name>GLYC_MOUSE</name>
<evidence type="ECO:0000250" key="1">
    <source>
        <dbReference type="UniProtKB" id="P34896"/>
    </source>
</evidence>
<evidence type="ECO:0000269" key="2">
    <source>
    </source>
</evidence>
<evidence type="ECO:0000305" key="3"/>
<evidence type="ECO:0007829" key="4">
    <source>
        <dbReference type="PDB" id="1EJI"/>
    </source>
</evidence>
<gene>
    <name type="primary">Shmt1</name>
    <name type="synonym">Shmt</name>
</gene>
<comment type="function">
    <text evidence="1">Interconversion of serine and glycine.</text>
</comment>
<comment type="catalytic activity">
    <reaction evidence="1">
        <text>(6R)-5,10-methylene-5,6,7,8-tetrahydrofolate + glycine + H2O = (6S)-5,6,7,8-tetrahydrofolate + L-serine</text>
        <dbReference type="Rhea" id="RHEA:15481"/>
        <dbReference type="ChEBI" id="CHEBI:15377"/>
        <dbReference type="ChEBI" id="CHEBI:15636"/>
        <dbReference type="ChEBI" id="CHEBI:33384"/>
        <dbReference type="ChEBI" id="CHEBI:57305"/>
        <dbReference type="ChEBI" id="CHEBI:57453"/>
        <dbReference type="EC" id="2.1.2.1"/>
    </reaction>
</comment>
<comment type="cofactor">
    <cofactor evidence="2">
        <name>pyridoxal 5'-phosphate</name>
        <dbReference type="ChEBI" id="CHEBI:597326"/>
    </cofactor>
</comment>
<comment type="pathway">
    <text evidence="1">One-carbon metabolism; tetrahydrofolate interconversion.</text>
</comment>
<comment type="subunit">
    <text evidence="1 2">Homotetramer (PubMed:11063567). Identified in complex with FAM175B and the other subunits of the BRISC complex, at least composed of FAM175B/ABRO1, BRCC3/BRCC36, BABAM2 and BABAM1/NBA1.</text>
</comment>
<comment type="subcellular location">
    <subcellularLocation>
        <location>Cytoplasm</location>
    </subcellularLocation>
</comment>
<comment type="miscellaneous">
    <text evidence="3">In eukaryotes there are two forms of the enzymes: a cytosolic one and a mitochondrial one.</text>
</comment>
<comment type="similarity">
    <text evidence="3">Belongs to the SHMT family.</text>
</comment>
<accession>P50431</accession>
<accession>Q64508</accession>
<accession>Q8R0X9</accession>
<organism>
    <name type="scientific">Mus musculus</name>
    <name type="common">Mouse</name>
    <dbReference type="NCBI Taxonomy" id="10090"/>
    <lineage>
        <taxon>Eukaryota</taxon>
        <taxon>Metazoa</taxon>
        <taxon>Chordata</taxon>
        <taxon>Craniata</taxon>
        <taxon>Vertebrata</taxon>
        <taxon>Euteleostomi</taxon>
        <taxon>Mammalia</taxon>
        <taxon>Eutheria</taxon>
        <taxon>Euarchontoglires</taxon>
        <taxon>Glires</taxon>
        <taxon>Rodentia</taxon>
        <taxon>Myomorpha</taxon>
        <taxon>Muroidea</taxon>
        <taxon>Muridae</taxon>
        <taxon>Murinae</taxon>
        <taxon>Mus</taxon>
        <taxon>Mus</taxon>
    </lineage>
</organism>
<protein>
    <recommendedName>
        <fullName>Serine hydroxymethyltransferase, cytosolic</fullName>
        <shortName>SHMT</shortName>
        <ecNumber evidence="1">2.1.2.1</ecNumber>
    </recommendedName>
    <alternativeName>
        <fullName>Glycine hydroxymethyltransferase</fullName>
    </alternativeName>
    <alternativeName>
        <fullName>Serine methylase</fullName>
    </alternativeName>
</protein>
<keyword id="KW-0002">3D-structure</keyword>
<keyword id="KW-0963">Cytoplasm</keyword>
<keyword id="KW-0903">Direct protein sequencing</keyword>
<keyword id="KW-0554">One-carbon metabolism</keyword>
<keyword id="KW-0663">Pyridoxal phosphate</keyword>
<keyword id="KW-1185">Reference proteome</keyword>
<keyword id="KW-0808">Transferase</keyword>